<organism>
    <name type="scientific">Salmonella enteritidis PT4 (strain P125109)</name>
    <dbReference type="NCBI Taxonomy" id="550537"/>
    <lineage>
        <taxon>Bacteria</taxon>
        <taxon>Pseudomonadati</taxon>
        <taxon>Pseudomonadota</taxon>
        <taxon>Gammaproteobacteria</taxon>
        <taxon>Enterobacterales</taxon>
        <taxon>Enterobacteriaceae</taxon>
        <taxon>Salmonella</taxon>
    </lineage>
</organism>
<proteinExistence type="inferred from homology"/>
<keyword id="KW-0413">Isomerase</keyword>
<name>UXAC_SALEP</name>
<sequence>MATFMTEDFLLKNDIARTLYHKYAAPMPIYDFHCHLSPQEIADDRRFDNLGQIWLEGDHYKWRALRSAGVDESLITGKETSDYEKYMAWANTVPKTLGNPLYHWTHLELRRPFGITGTLFGPDTAESIWTQCNEKLATPAFSARGIMQQMNVRMVGTTDDPIDSLEYHRQIAADDSIDIEVAPSWRPDKVFKIELDGFVDYLRKLEAAADVSITRFDDLRQALTRRLDHFAACGCRASDHGIETLRFAPVPDDAQLDAILGKRLAGETLSELEIAQFTTAVLVWLGRQYAARGWVMQLHIGAIRNNNTRMFRLLGPDTGFDSIGDNNISWALSRLLDSMDVTNELPKTILYCLNPRDNEVLATMIGNFQGPGIAGKVQFGSGWWFNDQKDGMLRQLEQLSQMGLLSQFVGMLTDSRSFLSYTRHEYFRRILCNLLGQWAQDGEIPDDEAMLSRMVQDICFNNAQRYFTIK</sequence>
<reference key="1">
    <citation type="journal article" date="2008" name="Genome Res.">
        <title>Comparative genome analysis of Salmonella enteritidis PT4 and Salmonella gallinarum 287/91 provides insights into evolutionary and host adaptation pathways.</title>
        <authorList>
            <person name="Thomson N.R."/>
            <person name="Clayton D.J."/>
            <person name="Windhorst D."/>
            <person name="Vernikos G."/>
            <person name="Davidson S."/>
            <person name="Churcher C."/>
            <person name="Quail M.A."/>
            <person name="Stevens M."/>
            <person name="Jones M.A."/>
            <person name="Watson M."/>
            <person name="Barron A."/>
            <person name="Layton A."/>
            <person name="Pickard D."/>
            <person name="Kingsley R.A."/>
            <person name="Bignell A."/>
            <person name="Clark L."/>
            <person name="Harris B."/>
            <person name="Ormond D."/>
            <person name="Abdellah Z."/>
            <person name="Brooks K."/>
            <person name="Cherevach I."/>
            <person name="Chillingworth T."/>
            <person name="Woodward J."/>
            <person name="Norberczak H."/>
            <person name="Lord A."/>
            <person name="Arrowsmith C."/>
            <person name="Jagels K."/>
            <person name="Moule S."/>
            <person name="Mungall K."/>
            <person name="Saunders M."/>
            <person name="Whitehead S."/>
            <person name="Chabalgoity J.A."/>
            <person name="Maskell D."/>
            <person name="Humphreys T."/>
            <person name="Roberts M."/>
            <person name="Barrow P.A."/>
            <person name="Dougan G."/>
            <person name="Parkhill J."/>
        </authorList>
    </citation>
    <scope>NUCLEOTIDE SEQUENCE [LARGE SCALE GENOMIC DNA]</scope>
    <source>
        <strain>P125109</strain>
    </source>
</reference>
<gene>
    <name evidence="1" type="primary">uxaC</name>
    <name type="ordered locus">SEN2980</name>
</gene>
<feature type="chain" id="PRO_1000131602" description="Uronate isomerase">
    <location>
        <begin position="1"/>
        <end position="470"/>
    </location>
</feature>
<evidence type="ECO:0000255" key="1">
    <source>
        <dbReference type="HAMAP-Rule" id="MF_00675"/>
    </source>
</evidence>
<comment type="catalytic activity">
    <reaction evidence="1">
        <text>D-glucuronate = D-fructuronate</text>
        <dbReference type="Rhea" id="RHEA:13049"/>
        <dbReference type="ChEBI" id="CHEBI:58720"/>
        <dbReference type="ChEBI" id="CHEBI:59863"/>
        <dbReference type="EC" id="5.3.1.12"/>
    </reaction>
</comment>
<comment type="catalytic activity">
    <reaction evidence="1">
        <text>aldehydo-D-galacturonate = keto-D-tagaturonate</text>
        <dbReference type="Rhea" id="RHEA:27702"/>
        <dbReference type="ChEBI" id="CHEBI:12952"/>
        <dbReference type="ChEBI" id="CHEBI:17886"/>
        <dbReference type="EC" id="5.3.1.12"/>
    </reaction>
</comment>
<comment type="pathway">
    <text evidence="1">Carbohydrate metabolism; pentose and glucuronate interconversion.</text>
</comment>
<comment type="similarity">
    <text evidence="1">Belongs to the metallo-dependent hydrolases superfamily. Uronate isomerase family.</text>
</comment>
<dbReference type="EC" id="5.3.1.12" evidence="1"/>
<dbReference type="EMBL" id="AM933172">
    <property type="protein sequence ID" value="CAR34556.1"/>
    <property type="molecule type" value="Genomic_DNA"/>
</dbReference>
<dbReference type="RefSeq" id="WP_000190182.1">
    <property type="nucleotide sequence ID" value="NC_011294.1"/>
</dbReference>
<dbReference type="SMR" id="B5QYB2"/>
<dbReference type="KEGG" id="set:SEN2980"/>
<dbReference type="HOGENOM" id="CLU_044465_1_0_6"/>
<dbReference type="UniPathway" id="UPA00246"/>
<dbReference type="Proteomes" id="UP000000613">
    <property type="component" value="Chromosome"/>
</dbReference>
<dbReference type="GO" id="GO:0008880">
    <property type="term" value="F:glucuronate isomerase activity"/>
    <property type="evidence" value="ECO:0007669"/>
    <property type="project" value="UniProtKB-UniRule"/>
</dbReference>
<dbReference type="GO" id="GO:0019698">
    <property type="term" value="P:D-galacturonate catabolic process"/>
    <property type="evidence" value="ECO:0007669"/>
    <property type="project" value="TreeGrafter"/>
</dbReference>
<dbReference type="GO" id="GO:0042840">
    <property type="term" value="P:D-glucuronate catabolic process"/>
    <property type="evidence" value="ECO:0007669"/>
    <property type="project" value="TreeGrafter"/>
</dbReference>
<dbReference type="Gene3D" id="3.20.20.140">
    <property type="entry name" value="Metal-dependent hydrolases"/>
    <property type="match status" value="1"/>
</dbReference>
<dbReference type="Gene3D" id="1.10.2020.10">
    <property type="entry name" value="uronate isomerase, domain 2, chain A"/>
    <property type="match status" value="1"/>
</dbReference>
<dbReference type="HAMAP" id="MF_00675">
    <property type="entry name" value="UxaC"/>
    <property type="match status" value="1"/>
</dbReference>
<dbReference type="InterPro" id="IPR032466">
    <property type="entry name" value="Metal_Hydrolase"/>
</dbReference>
<dbReference type="InterPro" id="IPR003766">
    <property type="entry name" value="Uronate_isomerase"/>
</dbReference>
<dbReference type="NCBIfam" id="NF002794">
    <property type="entry name" value="PRK02925.1"/>
    <property type="match status" value="1"/>
</dbReference>
<dbReference type="PANTHER" id="PTHR30068">
    <property type="entry name" value="URONATE ISOMERASE"/>
    <property type="match status" value="1"/>
</dbReference>
<dbReference type="PANTHER" id="PTHR30068:SF4">
    <property type="entry name" value="URONATE ISOMERASE"/>
    <property type="match status" value="1"/>
</dbReference>
<dbReference type="Pfam" id="PF02614">
    <property type="entry name" value="UxaC"/>
    <property type="match status" value="1"/>
</dbReference>
<dbReference type="SUPFAM" id="SSF51556">
    <property type="entry name" value="Metallo-dependent hydrolases"/>
    <property type="match status" value="1"/>
</dbReference>
<protein>
    <recommendedName>
        <fullName evidence="1">Uronate isomerase</fullName>
        <ecNumber evidence="1">5.3.1.12</ecNumber>
    </recommendedName>
    <alternativeName>
        <fullName evidence="1">Glucuronate isomerase</fullName>
    </alternativeName>
    <alternativeName>
        <fullName evidence="1">Uronic isomerase</fullName>
    </alternativeName>
</protein>
<accession>B5QYB2</accession>